<feature type="chain" id="PRO_1000010639" description="Peptidyl-tRNA hydrolase">
    <location>
        <begin position="1"/>
        <end position="225"/>
    </location>
</feature>
<feature type="region of interest" description="Disordered" evidence="2">
    <location>
        <begin position="187"/>
        <end position="225"/>
    </location>
</feature>
<feature type="compositionally biased region" description="Low complexity" evidence="2">
    <location>
        <begin position="200"/>
        <end position="210"/>
    </location>
</feature>
<feature type="active site" description="Proton acceptor" evidence="1">
    <location>
        <position position="19"/>
    </location>
</feature>
<feature type="binding site" evidence="1">
    <location>
        <position position="14"/>
    </location>
    <ligand>
        <name>tRNA</name>
        <dbReference type="ChEBI" id="CHEBI:17843"/>
    </ligand>
</feature>
<feature type="binding site" evidence="1">
    <location>
        <position position="64"/>
    </location>
    <ligand>
        <name>tRNA</name>
        <dbReference type="ChEBI" id="CHEBI:17843"/>
    </ligand>
</feature>
<feature type="binding site" evidence="1">
    <location>
        <position position="66"/>
    </location>
    <ligand>
        <name>tRNA</name>
        <dbReference type="ChEBI" id="CHEBI:17843"/>
    </ligand>
</feature>
<feature type="binding site" evidence="1">
    <location>
        <position position="112"/>
    </location>
    <ligand>
        <name>tRNA</name>
        <dbReference type="ChEBI" id="CHEBI:17843"/>
    </ligand>
</feature>
<feature type="site" description="Discriminates between blocked and unblocked aminoacyl-tRNA" evidence="1">
    <location>
        <position position="9"/>
    </location>
</feature>
<feature type="site" description="Stabilizes the basic form of H active site to accept a proton" evidence="1">
    <location>
        <position position="91"/>
    </location>
</feature>
<dbReference type="EC" id="3.1.1.29" evidence="1"/>
<dbReference type="EMBL" id="CP000661">
    <property type="protein sequence ID" value="ABP69258.1"/>
    <property type="molecule type" value="Genomic_DNA"/>
</dbReference>
<dbReference type="SMR" id="A4WPE4"/>
<dbReference type="STRING" id="349102.Rsph17025_0352"/>
<dbReference type="KEGG" id="rsq:Rsph17025_0352"/>
<dbReference type="eggNOG" id="COG0193">
    <property type="taxonomic scope" value="Bacteria"/>
</dbReference>
<dbReference type="HOGENOM" id="CLU_062456_1_0_5"/>
<dbReference type="BioCyc" id="RSPH349102:G1G8M-359-MONOMER"/>
<dbReference type="GO" id="GO:0005737">
    <property type="term" value="C:cytoplasm"/>
    <property type="evidence" value="ECO:0007669"/>
    <property type="project" value="UniProtKB-SubCell"/>
</dbReference>
<dbReference type="GO" id="GO:0004045">
    <property type="term" value="F:peptidyl-tRNA hydrolase activity"/>
    <property type="evidence" value="ECO:0007669"/>
    <property type="project" value="UniProtKB-UniRule"/>
</dbReference>
<dbReference type="GO" id="GO:0000049">
    <property type="term" value="F:tRNA binding"/>
    <property type="evidence" value="ECO:0007669"/>
    <property type="project" value="UniProtKB-UniRule"/>
</dbReference>
<dbReference type="GO" id="GO:0006515">
    <property type="term" value="P:protein quality control for misfolded or incompletely synthesized proteins"/>
    <property type="evidence" value="ECO:0007669"/>
    <property type="project" value="UniProtKB-UniRule"/>
</dbReference>
<dbReference type="GO" id="GO:0072344">
    <property type="term" value="P:rescue of stalled ribosome"/>
    <property type="evidence" value="ECO:0007669"/>
    <property type="project" value="UniProtKB-UniRule"/>
</dbReference>
<dbReference type="CDD" id="cd00462">
    <property type="entry name" value="PTH"/>
    <property type="match status" value="1"/>
</dbReference>
<dbReference type="FunFam" id="3.40.50.1470:FF:000001">
    <property type="entry name" value="Peptidyl-tRNA hydrolase"/>
    <property type="match status" value="1"/>
</dbReference>
<dbReference type="Gene3D" id="3.40.50.1470">
    <property type="entry name" value="Peptidyl-tRNA hydrolase"/>
    <property type="match status" value="1"/>
</dbReference>
<dbReference type="HAMAP" id="MF_00083">
    <property type="entry name" value="Pept_tRNA_hydro_bact"/>
    <property type="match status" value="1"/>
</dbReference>
<dbReference type="InterPro" id="IPR001328">
    <property type="entry name" value="Pept_tRNA_hydro"/>
</dbReference>
<dbReference type="InterPro" id="IPR018171">
    <property type="entry name" value="Pept_tRNA_hydro_CS"/>
</dbReference>
<dbReference type="InterPro" id="IPR036416">
    <property type="entry name" value="Pept_tRNA_hydro_sf"/>
</dbReference>
<dbReference type="NCBIfam" id="TIGR00447">
    <property type="entry name" value="pth"/>
    <property type="match status" value="1"/>
</dbReference>
<dbReference type="PANTHER" id="PTHR17224">
    <property type="entry name" value="PEPTIDYL-TRNA HYDROLASE"/>
    <property type="match status" value="1"/>
</dbReference>
<dbReference type="PANTHER" id="PTHR17224:SF1">
    <property type="entry name" value="PEPTIDYL-TRNA HYDROLASE"/>
    <property type="match status" value="1"/>
</dbReference>
<dbReference type="Pfam" id="PF01195">
    <property type="entry name" value="Pept_tRNA_hydro"/>
    <property type="match status" value="1"/>
</dbReference>
<dbReference type="SUPFAM" id="SSF53178">
    <property type="entry name" value="Peptidyl-tRNA hydrolase-like"/>
    <property type="match status" value="1"/>
</dbReference>
<dbReference type="PROSITE" id="PS01195">
    <property type="entry name" value="PEPT_TRNA_HYDROL_1"/>
    <property type="match status" value="1"/>
</dbReference>
<dbReference type="PROSITE" id="PS01196">
    <property type="entry name" value="PEPT_TRNA_HYDROL_2"/>
    <property type="match status" value="1"/>
</dbReference>
<sequence>MKLFVGLGNPGARYAGNRHNIGYMAVEAIASAHGFGPWRSRFQGVTSEGRLGAEQVLLLKPETFMNLSGQSVGEAMRFYKLSPADLTVFHDELDLAPGRLRLKQGGGHAGHNGLRSIHAHVGEAYGRVRLGIGHPGHKDAVASYVLNDFAKADQGWLEDLLRGIADGAEALARGDGARFQNAVALRMQPPKPEKPKGEAKPAAPEAPEAAPDTRSALQRLADRFR</sequence>
<proteinExistence type="inferred from homology"/>
<organism>
    <name type="scientific">Cereibacter sphaeroides (strain ATCC 17025 / ATH 2.4.3)</name>
    <name type="common">Rhodobacter sphaeroides</name>
    <dbReference type="NCBI Taxonomy" id="349102"/>
    <lineage>
        <taxon>Bacteria</taxon>
        <taxon>Pseudomonadati</taxon>
        <taxon>Pseudomonadota</taxon>
        <taxon>Alphaproteobacteria</taxon>
        <taxon>Rhodobacterales</taxon>
        <taxon>Paracoccaceae</taxon>
        <taxon>Cereibacter</taxon>
    </lineage>
</organism>
<protein>
    <recommendedName>
        <fullName evidence="1">Peptidyl-tRNA hydrolase</fullName>
        <shortName evidence="1">Pth</shortName>
        <ecNumber evidence="1">3.1.1.29</ecNumber>
    </recommendedName>
</protein>
<name>PTH_CERS5</name>
<evidence type="ECO:0000255" key="1">
    <source>
        <dbReference type="HAMAP-Rule" id="MF_00083"/>
    </source>
</evidence>
<evidence type="ECO:0000256" key="2">
    <source>
        <dbReference type="SAM" id="MobiDB-lite"/>
    </source>
</evidence>
<accession>A4WPE4</accession>
<gene>
    <name evidence="1" type="primary">pth</name>
    <name type="ordered locus">Rsph17025_0352</name>
</gene>
<comment type="function">
    <text evidence="1">Hydrolyzes ribosome-free peptidyl-tRNAs (with 1 or more amino acids incorporated), which drop off the ribosome during protein synthesis, or as a result of ribosome stalling.</text>
</comment>
<comment type="function">
    <text evidence="1">Catalyzes the release of premature peptidyl moieties from peptidyl-tRNA molecules trapped in stalled 50S ribosomal subunits, and thus maintains levels of free tRNAs and 50S ribosomes.</text>
</comment>
<comment type="catalytic activity">
    <reaction evidence="1">
        <text>an N-acyl-L-alpha-aminoacyl-tRNA + H2O = an N-acyl-L-amino acid + a tRNA + H(+)</text>
        <dbReference type="Rhea" id="RHEA:54448"/>
        <dbReference type="Rhea" id="RHEA-COMP:10123"/>
        <dbReference type="Rhea" id="RHEA-COMP:13883"/>
        <dbReference type="ChEBI" id="CHEBI:15377"/>
        <dbReference type="ChEBI" id="CHEBI:15378"/>
        <dbReference type="ChEBI" id="CHEBI:59874"/>
        <dbReference type="ChEBI" id="CHEBI:78442"/>
        <dbReference type="ChEBI" id="CHEBI:138191"/>
        <dbReference type="EC" id="3.1.1.29"/>
    </reaction>
</comment>
<comment type="subunit">
    <text evidence="1">Monomer.</text>
</comment>
<comment type="subcellular location">
    <subcellularLocation>
        <location evidence="1">Cytoplasm</location>
    </subcellularLocation>
</comment>
<comment type="similarity">
    <text evidence="1">Belongs to the PTH family.</text>
</comment>
<reference key="1">
    <citation type="submission" date="2007-04" db="EMBL/GenBank/DDBJ databases">
        <title>Complete sequence of chromosome of Rhodobacter sphaeroides ATCC 17025.</title>
        <authorList>
            <consortium name="US DOE Joint Genome Institute"/>
            <person name="Copeland A."/>
            <person name="Lucas S."/>
            <person name="Lapidus A."/>
            <person name="Barry K."/>
            <person name="Detter J.C."/>
            <person name="Glavina del Rio T."/>
            <person name="Hammon N."/>
            <person name="Israni S."/>
            <person name="Dalin E."/>
            <person name="Tice H."/>
            <person name="Pitluck S."/>
            <person name="Chertkov O."/>
            <person name="Brettin T."/>
            <person name="Bruce D."/>
            <person name="Han C."/>
            <person name="Schmutz J."/>
            <person name="Larimer F."/>
            <person name="Land M."/>
            <person name="Hauser L."/>
            <person name="Kyrpides N."/>
            <person name="Kim E."/>
            <person name="Richardson P."/>
            <person name="Mackenzie C."/>
            <person name="Choudhary M."/>
            <person name="Donohue T.J."/>
            <person name="Kaplan S."/>
        </authorList>
    </citation>
    <scope>NUCLEOTIDE SEQUENCE [LARGE SCALE GENOMIC DNA]</scope>
    <source>
        <strain>ATCC 17025 / ATH 2.4.3</strain>
    </source>
</reference>
<keyword id="KW-0963">Cytoplasm</keyword>
<keyword id="KW-0378">Hydrolase</keyword>
<keyword id="KW-0694">RNA-binding</keyword>
<keyword id="KW-0820">tRNA-binding</keyword>